<proteinExistence type="evidence at protein level"/>
<organism>
    <name type="scientific">Sporosarcina pasteurii</name>
    <name type="common">Bacillus pasteurii</name>
    <dbReference type="NCBI Taxonomy" id="1474"/>
    <lineage>
        <taxon>Bacteria</taxon>
        <taxon>Bacillati</taxon>
        <taxon>Bacillota</taxon>
        <taxon>Bacilli</taxon>
        <taxon>Bacillales</taxon>
        <taxon>Caryophanaceae</taxon>
        <taxon>Sporosarcina</taxon>
    </lineage>
</organism>
<evidence type="ECO:0000255" key="1">
    <source>
        <dbReference type="HAMAP-Rule" id="MF_01954"/>
    </source>
</evidence>
<evidence type="ECO:0000269" key="2">
    <source>
    </source>
</evidence>
<evidence type="ECO:0000269" key="3">
    <source>
    </source>
</evidence>
<evidence type="ECO:0000269" key="4">
    <source>
    </source>
</evidence>
<evidence type="ECO:0000269" key="5">
    <source>
    </source>
</evidence>
<evidence type="ECO:0000269" key="6">
    <source>
    </source>
</evidence>
<evidence type="ECO:0007829" key="7">
    <source>
        <dbReference type="PDB" id="5OL4"/>
    </source>
</evidence>
<keyword id="KW-0002">3D-structure</keyword>
<keyword id="KW-0963">Cytoplasm</keyword>
<keyword id="KW-0378">Hydrolase</keyword>
<accession>P41021</accession>
<reference key="1">
    <citation type="submission" date="1994-06" db="EMBL/GenBank/DDBJ databases">
        <title>Nucleotide sequence of three genes on a urease encoding DNA-fragment from Bacillus pasteurii.</title>
        <authorList>
            <person name="Moersdorf G."/>
            <person name="Weinmann P."/>
            <person name="Kaltwasser H."/>
        </authorList>
    </citation>
    <scope>NUCLEOTIDE SEQUENCE [GENOMIC DNA]</scope>
    <source>
        <strain>ATCC 11859 / DSM 33 / NCIB 8841 / NCTC 4822</strain>
    </source>
</reference>
<reference key="2">
    <citation type="journal article" date="1996" name="Eur. J. Biochem.">
        <title>X-ray absorption spectroscopy study of native and phenylphosphorodiamidate-inhibited Bacillus pasteurii urease.</title>
        <authorList>
            <person name="Benini S."/>
            <person name="Ciurli S."/>
            <person name="Nolting H.F."/>
            <person name="Mangani S."/>
        </authorList>
    </citation>
    <scope>X-RAY CRYSTALLOGRAPHY (1.65 ANGSTROMS) OF 5-126</scope>
</reference>
<reference key="3">
    <citation type="journal article" date="1998" name="Acta Crystallogr. D">
        <title>Crystallization and preliminary high-resolution X-ray diffraction analysis of native and beta-mercaptoethanol-inhibited urease from Bacillus pasteurii.</title>
        <authorList>
            <person name="Benini S."/>
            <person name="Ciurli S."/>
            <person name="Rypniewski W.R."/>
            <person name="Wilson K.S."/>
            <person name="Mangani S."/>
        </authorList>
    </citation>
    <scope>X-RAY CRYSTALLOGRAPHY (1.65 ANGSTROMS) IN COMPLEX WITH UREA; UREC AND BETA-MERCAPTOETHANOL</scope>
</reference>
<reference key="4">
    <citation type="journal article" date="1999" name="Structure">
        <title>A new proposal for urease mechanism based on the crystal structures of the native and inhibited enzyme from Bacillus pasteurii: why urea hydrolysis costs two nickels.</title>
        <authorList>
            <person name="Benini S."/>
            <person name="Rypniewski W.R."/>
            <person name="Wilson K.S."/>
            <person name="Miletti S."/>
            <person name="Ciurli S."/>
            <person name="Mangani S."/>
        </authorList>
    </citation>
    <scope>X-RAY CRYSTALLOGRAPHY (2.0 ANGSTROMS) IN COMPLEX WITH UREA; UREC AND DIAMIDOPHOSPHATE</scope>
</reference>
<reference key="5">
    <citation type="journal article" date="2000" name="J. Biol. Inorg. Chem.">
        <title>The complex of Bacillus pasteurii urease with acetohydroxamate anion from X-ray data at 1.55 A resolution.</title>
        <authorList>
            <person name="Benini S."/>
            <person name="Rypniewski W.R."/>
            <person name="Wilson K.S."/>
            <person name="Miletti S."/>
            <person name="Ciurli S."/>
            <person name="Mangani S."/>
        </authorList>
    </citation>
    <scope>X-RAY CRYSTALLOGRAPHY (1.55 ANGSTROMS) IN COMPLEX WITH UREA; UREC AND ACETOHYDROXAMIC ACID</scope>
</reference>
<reference key="6">
    <citation type="journal article" date="2001" name="J. Biol. Inorg. Chem.">
        <title>Structure-based rationalization of urease inhibition by phosphate: novel insights into the enzyme mechanism.</title>
        <authorList>
            <person name="Benini S."/>
            <person name="Rypniewski W.R."/>
            <person name="Wilson K.S."/>
            <person name="Ciurli S."/>
            <person name="Mangani S."/>
        </authorList>
    </citation>
    <scope>X-RAY CRYSTALLOGRAPHY (1.85 ANGSTROMS) IN COMPLEX WITH UREA; UREC AND PHOSPHATE</scope>
</reference>
<reference key="7">
    <citation type="journal article" date="2004" name="J. Am. Chem. Soc.">
        <title>Molecular details of urease inhibition by boric acid: insights into the catalytic mechanism.</title>
        <authorList>
            <person name="Benini S."/>
            <person name="Rypniewski W.R."/>
            <person name="Wilson K.S."/>
            <person name="Mangani S."/>
            <person name="Ciurli S."/>
        </authorList>
    </citation>
    <scope>X-RAY CRYSTALLOGRAPHY (2.1 ANGSTROMS) IN COMPLEX WITH UREA; UREC AND BORATE IONS</scope>
</reference>
<protein>
    <recommendedName>
        <fullName evidence="1">Urease subunit beta</fullName>
        <ecNumber evidence="1">3.5.1.5</ecNumber>
    </recommendedName>
    <alternativeName>
        <fullName evidence="1">Urea amidohydrolase subunit beta</fullName>
    </alternativeName>
</protein>
<sequence>MSNNNYIVPGEYRVAEGEIEINAGREKTTIRVSNTGDRPIQVGSHIHFVEVNKELLFDRAEGIGRRLNIPSGTAARFEPGEEMEVELTELGGNREVFGISDLTNGSVDNKELILQRAKELGYKGVE</sequence>
<dbReference type="EC" id="3.5.1.5" evidence="1"/>
<dbReference type="EMBL" id="X78411">
    <property type="protein sequence ID" value="CAA55174.1"/>
    <property type="molecule type" value="Genomic_DNA"/>
</dbReference>
<dbReference type="PIR" id="S47103">
    <property type="entry name" value="S47103"/>
</dbReference>
<dbReference type="PDB" id="1IE7">
    <property type="method" value="X-ray"/>
    <property type="resolution" value="1.85 A"/>
    <property type="chains" value="B=1-126"/>
</dbReference>
<dbReference type="PDB" id="1S3T">
    <property type="method" value="X-ray"/>
    <property type="resolution" value="2.10 A"/>
    <property type="chains" value="B=1-126"/>
</dbReference>
<dbReference type="PDB" id="1UBP">
    <property type="method" value="X-ray"/>
    <property type="resolution" value="1.65 A"/>
    <property type="chains" value="B=5-126"/>
</dbReference>
<dbReference type="PDB" id="2UBP">
    <property type="method" value="X-ray"/>
    <property type="resolution" value="2.00 A"/>
    <property type="chains" value="B=5-126"/>
</dbReference>
<dbReference type="PDB" id="3UBP">
    <property type="method" value="X-ray"/>
    <property type="resolution" value="2.00 A"/>
    <property type="chains" value="B=1-126"/>
</dbReference>
<dbReference type="PDB" id="4AC7">
    <property type="method" value="X-ray"/>
    <property type="resolution" value="1.50 A"/>
    <property type="chains" value="B=1-126"/>
</dbReference>
<dbReference type="PDB" id="4CEU">
    <property type="method" value="X-ray"/>
    <property type="resolution" value="1.58 A"/>
    <property type="chains" value="B=1-126"/>
</dbReference>
<dbReference type="PDB" id="4CEX">
    <property type="method" value="X-ray"/>
    <property type="resolution" value="1.59 A"/>
    <property type="chains" value="B=1-126"/>
</dbReference>
<dbReference type="PDB" id="4UBP">
    <property type="method" value="X-ray"/>
    <property type="resolution" value="1.55 A"/>
    <property type="chains" value="B=1-126"/>
</dbReference>
<dbReference type="PDB" id="5A6T">
    <property type="method" value="X-ray"/>
    <property type="resolution" value="1.65 A"/>
    <property type="chains" value="B=1-126"/>
</dbReference>
<dbReference type="PDB" id="5FSD">
    <property type="method" value="X-ray"/>
    <property type="resolution" value="1.75 A"/>
    <property type="chains" value="B=1-126"/>
</dbReference>
<dbReference type="PDB" id="5FSE">
    <property type="method" value="X-ray"/>
    <property type="resolution" value="2.07 A"/>
    <property type="chains" value="B=1-126"/>
</dbReference>
<dbReference type="PDB" id="5G4H">
    <property type="method" value="X-ray"/>
    <property type="resolution" value="1.50 A"/>
    <property type="chains" value="B=1-126"/>
</dbReference>
<dbReference type="PDB" id="5OL4">
    <property type="method" value="X-ray"/>
    <property type="resolution" value="1.28 A"/>
    <property type="chains" value="B=5-126"/>
</dbReference>
<dbReference type="PDB" id="6G48">
    <property type="method" value="X-ray"/>
    <property type="resolution" value="1.91 A"/>
    <property type="chains" value="B=5-126"/>
</dbReference>
<dbReference type="PDB" id="6H8J">
    <property type="method" value="X-ray"/>
    <property type="resolution" value="1.45 A"/>
    <property type="chains" value="B=5-126"/>
</dbReference>
<dbReference type="PDB" id="6I9Y">
    <property type="method" value="X-ray"/>
    <property type="resolution" value="2.14 A"/>
    <property type="chains" value="B=5-126"/>
</dbReference>
<dbReference type="PDB" id="6QDY">
    <property type="method" value="X-ray"/>
    <property type="resolution" value="1.42 A"/>
    <property type="chains" value="B=5-126"/>
</dbReference>
<dbReference type="PDB" id="6RKG">
    <property type="method" value="X-ray"/>
    <property type="resolution" value="1.32 A"/>
    <property type="chains" value="B=5-126"/>
</dbReference>
<dbReference type="PDB" id="6RP1">
    <property type="method" value="X-ray"/>
    <property type="resolution" value="1.49 A"/>
    <property type="chains" value="B=5-126"/>
</dbReference>
<dbReference type="PDB" id="6ZNY">
    <property type="method" value="X-ray"/>
    <property type="resolution" value="1.50 A"/>
    <property type="chains" value="BBB=5-126"/>
</dbReference>
<dbReference type="PDB" id="6ZNZ">
    <property type="method" value="X-ray"/>
    <property type="resolution" value="1.89 A"/>
    <property type="chains" value="BBB=5-126"/>
</dbReference>
<dbReference type="PDB" id="6ZO0">
    <property type="method" value="X-ray"/>
    <property type="resolution" value="2.23 A"/>
    <property type="chains" value="BBB=5-126"/>
</dbReference>
<dbReference type="PDB" id="6ZO1">
    <property type="method" value="X-ray"/>
    <property type="resolution" value="1.61 A"/>
    <property type="chains" value="BBB=5-126"/>
</dbReference>
<dbReference type="PDB" id="6ZO2">
    <property type="method" value="X-ray"/>
    <property type="resolution" value="1.65 A"/>
    <property type="chains" value="BBB=5-126"/>
</dbReference>
<dbReference type="PDB" id="6ZO3">
    <property type="method" value="X-ray"/>
    <property type="resolution" value="1.55 A"/>
    <property type="chains" value="BBB=5-126"/>
</dbReference>
<dbReference type="PDB" id="7B58">
    <property type="method" value="X-ray"/>
    <property type="resolution" value="1.72 A"/>
    <property type="chains" value="BBB=5-126"/>
</dbReference>
<dbReference type="PDB" id="7B59">
    <property type="method" value="X-ray"/>
    <property type="resolution" value="1.63 A"/>
    <property type="chains" value="BBB=5-126"/>
</dbReference>
<dbReference type="PDB" id="7B5A">
    <property type="method" value="X-ray"/>
    <property type="resolution" value="1.97 A"/>
    <property type="chains" value="BBB=5-126"/>
</dbReference>
<dbReference type="PDB" id="7P7N">
    <property type="method" value="X-ray"/>
    <property type="resolution" value="1.80 A"/>
    <property type="chains" value="BBB=5-126"/>
</dbReference>
<dbReference type="PDB" id="7P7O">
    <property type="method" value="X-ray"/>
    <property type="resolution" value="1.87 A"/>
    <property type="chains" value="BBB=5-126"/>
</dbReference>
<dbReference type="PDB" id="7ZCY">
    <property type="method" value="X-ray"/>
    <property type="resolution" value="1.54 A"/>
    <property type="chains" value="B=5-126"/>
</dbReference>
<dbReference type="PDB" id="8A18">
    <property type="method" value="X-ray"/>
    <property type="resolution" value="1.63 A"/>
    <property type="chains" value="BBB=5-126"/>
</dbReference>
<dbReference type="PDB" id="8Q2E">
    <property type="method" value="X-ray"/>
    <property type="resolution" value="1.68 A"/>
    <property type="chains" value="B=5-126"/>
</dbReference>
<dbReference type="PDBsum" id="1IE7"/>
<dbReference type="PDBsum" id="1S3T"/>
<dbReference type="PDBsum" id="1UBP"/>
<dbReference type="PDBsum" id="2UBP"/>
<dbReference type="PDBsum" id="3UBP"/>
<dbReference type="PDBsum" id="4AC7"/>
<dbReference type="PDBsum" id="4CEU"/>
<dbReference type="PDBsum" id="4CEX"/>
<dbReference type="PDBsum" id="4UBP"/>
<dbReference type="PDBsum" id="5A6T"/>
<dbReference type="PDBsum" id="5FSD"/>
<dbReference type="PDBsum" id="5FSE"/>
<dbReference type="PDBsum" id="5G4H"/>
<dbReference type="PDBsum" id="5OL4"/>
<dbReference type="PDBsum" id="6G48"/>
<dbReference type="PDBsum" id="6H8J"/>
<dbReference type="PDBsum" id="6I9Y"/>
<dbReference type="PDBsum" id="6QDY"/>
<dbReference type="PDBsum" id="6RKG"/>
<dbReference type="PDBsum" id="6RP1"/>
<dbReference type="PDBsum" id="6ZNY"/>
<dbReference type="PDBsum" id="6ZNZ"/>
<dbReference type="PDBsum" id="6ZO0"/>
<dbReference type="PDBsum" id="6ZO1"/>
<dbReference type="PDBsum" id="6ZO2"/>
<dbReference type="PDBsum" id="6ZO3"/>
<dbReference type="PDBsum" id="7B58"/>
<dbReference type="PDBsum" id="7B59"/>
<dbReference type="PDBsum" id="7B5A"/>
<dbReference type="PDBsum" id="7P7N"/>
<dbReference type="PDBsum" id="7P7O"/>
<dbReference type="PDBsum" id="7ZCY"/>
<dbReference type="PDBsum" id="8A18"/>
<dbReference type="PDBsum" id="8Q2E"/>
<dbReference type="SMR" id="P41021"/>
<dbReference type="BindingDB" id="P41021"/>
<dbReference type="DrugBank" id="DB02899">
    <property type="generic name" value="N-Carboxymethionine"/>
</dbReference>
<dbReference type="BRENDA" id="3.5.1.5">
    <property type="organism ID" value="682"/>
</dbReference>
<dbReference type="UniPathway" id="UPA00258">
    <property type="reaction ID" value="UER00370"/>
</dbReference>
<dbReference type="EvolutionaryTrace" id="P41021"/>
<dbReference type="GO" id="GO:0035550">
    <property type="term" value="C:urease complex"/>
    <property type="evidence" value="ECO:0007669"/>
    <property type="project" value="InterPro"/>
</dbReference>
<dbReference type="GO" id="GO:0009039">
    <property type="term" value="F:urease activity"/>
    <property type="evidence" value="ECO:0007669"/>
    <property type="project" value="UniProtKB-UniRule"/>
</dbReference>
<dbReference type="GO" id="GO:0043419">
    <property type="term" value="P:urea catabolic process"/>
    <property type="evidence" value="ECO:0007669"/>
    <property type="project" value="UniProtKB-UniRule"/>
</dbReference>
<dbReference type="CDD" id="cd00407">
    <property type="entry name" value="Urease_beta"/>
    <property type="match status" value="1"/>
</dbReference>
<dbReference type="FunFam" id="2.10.150.10:FF:000001">
    <property type="entry name" value="Urease subunit beta"/>
    <property type="match status" value="1"/>
</dbReference>
<dbReference type="Gene3D" id="2.10.150.10">
    <property type="entry name" value="Urease, beta subunit"/>
    <property type="match status" value="1"/>
</dbReference>
<dbReference type="HAMAP" id="MF_01954">
    <property type="entry name" value="Urease_beta"/>
    <property type="match status" value="1"/>
</dbReference>
<dbReference type="InterPro" id="IPR002019">
    <property type="entry name" value="Urease_beta-like"/>
</dbReference>
<dbReference type="InterPro" id="IPR036461">
    <property type="entry name" value="Urease_betasu_sf"/>
</dbReference>
<dbReference type="InterPro" id="IPR050069">
    <property type="entry name" value="Urease_subunit"/>
</dbReference>
<dbReference type="NCBIfam" id="NF009682">
    <property type="entry name" value="PRK13203.1"/>
    <property type="match status" value="1"/>
</dbReference>
<dbReference type="NCBIfam" id="TIGR00192">
    <property type="entry name" value="urease_beta"/>
    <property type="match status" value="1"/>
</dbReference>
<dbReference type="PANTHER" id="PTHR33569">
    <property type="entry name" value="UREASE"/>
    <property type="match status" value="1"/>
</dbReference>
<dbReference type="PANTHER" id="PTHR33569:SF1">
    <property type="entry name" value="UREASE"/>
    <property type="match status" value="1"/>
</dbReference>
<dbReference type="Pfam" id="PF00699">
    <property type="entry name" value="Urease_beta"/>
    <property type="match status" value="1"/>
</dbReference>
<dbReference type="SUPFAM" id="SSF51278">
    <property type="entry name" value="Urease, beta-subunit"/>
    <property type="match status" value="1"/>
</dbReference>
<gene>
    <name evidence="1" type="primary">ureB</name>
</gene>
<feature type="chain" id="PRO_0000067569" description="Urease subunit beta">
    <location>
        <begin position="1"/>
        <end position="126"/>
    </location>
</feature>
<feature type="strand" evidence="7">
    <location>
        <begin position="16"/>
        <end position="20"/>
    </location>
</feature>
<feature type="turn" evidence="7">
    <location>
        <begin position="21"/>
        <end position="24"/>
    </location>
</feature>
<feature type="strand" evidence="7">
    <location>
        <begin position="27"/>
        <end position="34"/>
    </location>
</feature>
<feature type="strand" evidence="7">
    <location>
        <begin position="36"/>
        <end position="38"/>
    </location>
</feature>
<feature type="strand" evidence="7">
    <location>
        <begin position="40"/>
        <end position="43"/>
    </location>
</feature>
<feature type="helix" evidence="7">
    <location>
        <begin position="48"/>
        <end position="50"/>
    </location>
</feature>
<feature type="strand" evidence="7">
    <location>
        <begin position="55"/>
        <end position="57"/>
    </location>
</feature>
<feature type="helix" evidence="7">
    <location>
        <begin position="59"/>
        <end position="62"/>
    </location>
</feature>
<feature type="strand" evidence="7">
    <location>
        <begin position="65"/>
        <end position="67"/>
    </location>
</feature>
<feature type="strand" evidence="7">
    <location>
        <begin position="74"/>
        <end position="77"/>
    </location>
</feature>
<feature type="strand" evidence="7">
    <location>
        <begin position="82"/>
        <end position="89"/>
    </location>
</feature>
<feature type="strand" evidence="7">
    <location>
        <begin position="104"/>
        <end position="106"/>
    </location>
</feature>
<feature type="helix" evidence="7">
    <location>
        <begin position="110"/>
        <end position="120"/>
    </location>
</feature>
<name>URE2_SPOPA</name>
<comment type="catalytic activity">
    <reaction evidence="1">
        <text>urea + 2 H2O + H(+) = hydrogencarbonate + 2 NH4(+)</text>
        <dbReference type="Rhea" id="RHEA:20557"/>
        <dbReference type="ChEBI" id="CHEBI:15377"/>
        <dbReference type="ChEBI" id="CHEBI:15378"/>
        <dbReference type="ChEBI" id="CHEBI:16199"/>
        <dbReference type="ChEBI" id="CHEBI:17544"/>
        <dbReference type="ChEBI" id="CHEBI:28938"/>
        <dbReference type="EC" id="3.5.1.5"/>
    </reaction>
</comment>
<comment type="pathway">
    <text evidence="1">Nitrogen metabolism; urea degradation; CO(2) and NH(3) from urea (urease route): step 1/1.</text>
</comment>
<comment type="subunit">
    <text evidence="1 2 3 4 5 6">Heterotrimer of UreA (gamma), UreB (beta) and UreC (alpha) subunits. Three heterotrimers associate to form the active enzyme.</text>
</comment>
<comment type="subcellular location">
    <subcellularLocation>
        <location evidence="1">Cytoplasm</location>
    </subcellularLocation>
</comment>
<comment type="similarity">
    <text evidence="1">Belongs to the urease beta subunit family.</text>
</comment>